<accession>Q814Q1</accession>
<dbReference type="EC" id="2.5.1.16" evidence="1"/>
<dbReference type="EMBL" id="AE016877">
    <property type="protein sequence ID" value="AAP12233.1"/>
    <property type="molecule type" value="Genomic_DNA"/>
</dbReference>
<dbReference type="RefSeq" id="NP_835032.1">
    <property type="nucleotide sequence ID" value="NC_004722.1"/>
</dbReference>
<dbReference type="RefSeq" id="WP_000424691.1">
    <property type="nucleotide sequence ID" value="NC_004722.1"/>
</dbReference>
<dbReference type="SMR" id="Q814Q1"/>
<dbReference type="STRING" id="226900.BC_5371"/>
<dbReference type="KEGG" id="bce:BC5371"/>
<dbReference type="PATRIC" id="fig|226900.8.peg.5546"/>
<dbReference type="HOGENOM" id="CLU_048199_0_0_9"/>
<dbReference type="UniPathway" id="UPA00248">
    <property type="reaction ID" value="UER00314"/>
</dbReference>
<dbReference type="Proteomes" id="UP000001417">
    <property type="component" value="Chromosome"/>
</dbReference>
<dbReference type="GO" id="GO:0005829">
    <property type="term" value="C:cytosol"/>
    <property type="evidence" value="ECO:0000318"/>
    <property type="project" value="GO_Central"/>
</dbReference>
<dbReference type="GO" id="GO:0004766">
    <property type="term" value="F:spermidine synthase activity"/>
    <property type="evidence" value="ECO:0000318"/>
    <property type="project" value="GO_Central"/>
</dbReference>
<dbReference type="GO" id="GO:0008295">
    <property type="term" value="P:spermidine biosynthetic process"/>
    <property type="evidence" value="ECO:0000318"/>
    <property type="project" value="GO_Central"/>
</dbReference>
<dbReference type="CDD" id="cd02440">
    <property type="entry name" value="AdoMet_MTases"/>
    <property type="match status" value="1"/>
</dbReference>
<dbReference type="FunFam" id="2.30.140.10:FF:000004">
    <property type="entry name" value="Polyamine aminopropyltransferase"/>
    <property type="match status" value="1"/>
</dbReference>
<dbReference type="FunFam" id="3.40.50.150:FF:000056">
    <property type="entry name" value="Polyamine aminopropyltransferase"/>
    <property type="match status" value="1"/>
</dbReference>
<dbReference type="Gene3D" id="2.30.140.10">
    <property type="entry name" value="Spermidine synthase, tetramerisation domain"/>
    <property type="match status" value="1"/>
</dbReference>
<dbReference type="Gene3D" id="3.40.50.150">
    <property type="entry name" value="Vaccinia Virus protein VP39"/>
    <property type="match status" value="1"/>
</dbReference>
<dbReference type="HAMAP" id="MF_00198">
    <property type="entry name" value="Spermidine_synth"/>
    <property type="match status" value="1"/>
</dbReference>
<dbReference type="InterPro" id="IPR030374">
    <property type="entry name" value="PABS"/>
</dbReference>
<dbReference type="InterPro" id="IPR030373">
    <property type="entry name" value="PABS_CS"/>
</dbReference>
<dbReference type="InterPro" id="IPR029063">
    <property type="entry name" value="SAM-dependent_MTases_sf"/>
</dbReference>
<dbReference type="InterPro" id="IPR001045">
    <property type="entry name" value="Spermi_synthase"/>
</dbReference>
<dbReference type="InterPro" id="IPR035246">
    <property type="entry name" value="Spermidine_synt_N"/>
</dbReference>
<dbReference type="InterPro" id="IPR037163">
    <property type="entry name" value="Spermidine_synt_N_sf"/>
</dbReference>
<dbReference type="NCBIfam" id="NF037959">
    <property type="entry name" value="MFS_SpdSyn"/>
    <property type="match status" value="1"/>
</dbReference>
<dbReference type="NCBIfam" id="NF002010">
    <property type="entry name" value="PRK00811.1"/>
    <property type="match status" value="1"/>
</dbReference>
<dbReference type="NCBIfam" id="TIGR00417">
    <property type="entry name" value="speE"/>
    <property type="match status" value="1"/>
</dbReference>
<dbReference type="PANTHER" id="PTHR11558:SF11">
    <property type="entry name" value="SPERMIDINE SYNTHASE"/>
    <property type="match status" value="1"/>
</dbReference>
<dbReference type="PANTHER" id="PTHR11558">
    <property type="entry name" value="SPERMIDINE/SPERMINE SYNTHASE"/>
    <property type="match status" value="1"/>
</dbReference>
<dbReference type="Pfam" id="PF17284">
    <property type="entry name" value="Spermine_synt_N"/>
    <property type="match status" value="1"/>
</dbReference>
<dbReference type="Pfam" id="PF01564">
    <property type="entry name" value="Spermine_synth"/>
    <property type="match status" value="1"/>
</dbReference>
<dbReference type="SUPFAM" id="SSF53335">
    <property type="entry name" value="S-adenosyl-L-methionine-dependent methyltransferases"/>
    <property type="match status" value="1"/>
</dbReference>
<dbReference type="PROSITE" id="PS01330">
    <property type="entry name" value="PABS_1"/>
    <property type="match status" value="1"/>
</dbReference>
<dbReference type="PROSITE" id="PS51006">
    <property type="entry name" value="PABS_2"/>
    <property type="match status" value="1"/>
</dbReference>
<comment type="function">
    <text evidence="1">Catalyzes the irreversible transfer of a propylamine group from the amino donor S-adenosylmethioninamine (decarboxy-AdoMet) to putrescine (1,4-diaminobutane) to yield spermidine.</text>
</comment>
<comment type="catalytic activity">
    <reaction evidence="1">
        <text>S-adenosyl 3-(methylsulfanyl)propylamine + putrescine = S-methyl-5'-thioadenosine + spermidine + H(+)</text>
        <dbReference type="Rhea" id="RHEA:12721"/>
        <dbReference type="ChEBI" id="CHEBI:15378"/>
        <dbReference type="ChEBI" id="CHEBI:17509"/>
        <dbReference type="ChEBI" id="CHEBI:57443"/>
        <dbReference type="ChEBI" id="CHEBI:57834"/>
        <dbReference type="ChEBI" id="CHEBI:326268"/>
        <dbReference type="EC" id="2.5.1.16"/>
    </reaction>
</comment>
<comment type="pathway">
    <text evidence="1">Amine and polyamine biosynthesis; spermidine biosynthesis; spermidine from putrescine: step 1/1.</text>
</comment>
<comment type="subunit">
    <text evidence="1">Homodimer or homotetramer.</text>
</comment>
<comment type="subcellular location">
    <subcellularLocation>
        <location evidence="1">Cytoplasm</location>
    </subcellularLocation>
</comment>
<comment type="similarity">
    <text evidence="1">Belongs to the spermidine/spermine synthase family.</text>
</comment>
<proteinExistence type="inferred from homology"/>
<organism>
    <name type="scientific">Bacillus cereus (strain ATCC 14579 / DSM 31 / CCUG 7414 / JCM 2152 / NBRC 15305 / NCIMB 9373 / NCTC 2599 / NRRL B-3711)</name>
    <dbReference type="NCBI Taxonomy" id="226900"/>
    <lineage>
        <taxon>Bacteria</taxon>
        <taxon>Bacillati</taxon>
        <taxon>Bacillota</taxon>
        <taxon>Bacilli</taxon>
        <taxon>Bacillales</taxon>
        <taxon>Bacillaceae</taxon>
        <taxon>Bacillus</taxon>
        <taxon>Bacillus cereus group</taxon>
    </lineage>
</organism>
<evidence type="ECO:0000255" key="1">
    <source>
        <dbReference type="HAMAP-Rule" id="MF_00198"/>
    </source>
</evidence>
<reference key="1">
    <citation type="journal article" date="2003" name="Nature">
        <title>Genome sequence of Bacillus cereus and comparative analysis with Bacillus anthracis.</title>
        <authorList>
            <person name="Ivanova N."/>
            <person name="Sorokin A."/>
            <person name="Anderson I."/>
            <person name="Galleron N."/>
            <person name="Candelon B."/>
            <person name="Kapatral V."/>
            <person name="Bhattacharyya A."/>
            <person name="Reznik G."/>
            <person name="Mikhailova N."/>
            <person name="Lapidus A."/>
            <person name="Chu L."/>
            <person name="Mazur M."/>
            <person name="Goltsman E."/>
            <person name="Larsen N."/>
            <person name="D'Souza M."/>
            <person name="Walunas T."/>
            <person name="Grechkin Y."/>
            <person name="Pusch G."/>
            <person name="Haselkorn R."/>
            <person name="Fonstein M."/>
            <person name="Ehrlich S.D."/>
            <person name="Overbeek R."/>
            <person name="Kyrpides N.C."/>
        </authorList>
    </citation>
    <scope>NUCLEOTIDE SEQUENCE [LARGE SCALE GENOMIC DNA]</scope>
    <source>
        <strain>ATCC 14579 / DSM 31 / CCUG 7414 / JCM 2152 / NBRC 15305 / NCIMB 9373 / NCTC 2599 / NRRL B-3711</strain>
    </source>
</reference>
<sequence>MELWFTEKQTKHFGITARINRTLHTEQTEFQKLDMVETEEFGNMLILDGMVMTTEKDEFVYHEMVAHVPLFTHPNPENVLIVGGGDGGVIREVLKHPSVKKATLVEIDGKVIEYSKQYLPSIAGALDNERVEVKVGDGFLHIAESENEYDVIMVDSTEPVGPAVNLFTKGFYAGISKALKEDGIFVAQTDNPWFTPELITTVFKDVKEIFPITRLYTANIPTYPSGLWTFTIGSKKHDPLEVIEERFHEIETKYYTKELHNAAFALPKFVGDLIK</sequence>
<feature type="chain" id="PRO_0000156467" description="Polyamine aminopropyltransferase 1">
    <location>
        <begin position="1"/>
        <end position="275"/>
    </location>
</feature>
<feature type="domain" description="PABS" evidence="1">
    <location>
        <begin position="2"/>
        <end position="235"/>
    </location>
</feature>
<feature type="active site" description="Proton acceptor" evidence="1">
    <location>
        <position position="155"/>
    </location>
</feature>
<feature type="binding site" evidence="1">
    <location>
        <position position="31"/>
    </location>
    <ligand>
        <name>S-methyl-5'-thioadenosine</name>
        <dbReference type="ChEBI" id="CHEBI:17509"/>
    </ligand>
</feature>
<feature type="binding site" evidence="1">
    <location>
        <position position="62"/>
    </location>
    <ligand>
        <name>spermidine</name>
        <dbReference type="ChEBI" id="CHEBI:57834"/>
    </ligand>
</feature>
<feature type="binding site" evidence="1">
    <location>
        <position position="86"/>
    </location>
    <ligand>
        <name>spermidine</name>
        <dbReference type="ChEBI" id="CHEBI:57834"/>
    </ligand>
</feature>
<feature type="binding site" evidence="1">
    <location>
        <position position="106"/>
    </location>
    <ligand>
        <name>S-methyl-5'-thioadenosine</name>
        <dbReference type="ChEBI" id="CHEBI:17509"/>
    </ligand>
</feature>
<feature type="binding site" evidence="1">
    <location>
        <begin position="137"/>
        <end position="138"/>
    </location>
    <ligand>
        <name>S-methyl-5'-thioadenosine</name>
        <dbReference type="ChEBI" id="CHEBI:17509"/>
    </ligand>
</feature>
<feature type="binding site" evidence="1">
    <location>
        <begin position="155"/>
        <end position="158"/>
    </location>
    <ligand>
        <name>spermidine</name>
        <dbReference type="ChEBI" id="CHEBI:57834"/>
    </ligand>
</feature>
<feature type="binding site" evidence="1">
    <location>
        <position position="162"/>
    </location>
    <ligand>
        <name>S-methyl-5'-thioadenosine</name>
        <dbReference type="ChEBI" id="CHEBI:17509"/>
    </ligand>
</feature>
<protein>
    <recommendedName>
        <fullName evidence="1">Polyamine aminopropyltransferase 1</fullName>
    </recommendedName>
    <alternativeName>
        <fullName evidence="1">Putrescine aminopropyltransferase</fullName>
        <shortName evidence="1">PAPT</shortName>
    </alternativeName>
    <alternativeName>
        <fullName evidence="1">Spermidine synthase</fullName>
        <shortName evidence="1">SPDS</shortName>
        <shortName evidence="1">SPDSY</shortName>
        <ecNumber evidence="1">2.5.1.16</ecNumber>
    </alternativeName>
</protein>
<gene>
    <name evidence="1" type="primary">speE1</name>
    <name type="synonym">speE</name>
    <name type="ordered locus">BC_5371</name>
</gene>
<keyword id="KW-0963">Cytoplasm</keyword>
<keyword id="KW-0620">Polyamine biosynthesis</keyword>
<keyword id="KW-1185">Reference proteome</keyword>
<keyword id="KW-0745">Spermidine biosynthesis</keyword>
<keyword id="KW-0808">Transferase</keyword>
<name>SPEE1_BACCR</name>